<sequence>MPKAVGIDLGTTNSVIATMEGGRPEVIVNAEGARTTPSVVAYKGDERLVGQIARRQAALNPKATLFEVKRFIGRRWDEVKEEAARMPFTVKEGPGGSVRIEVNGKDLAPEQVSAEVLRKLVADASAKLGEKITDAVITVPAYFDNSQREATKQAGEIAGLNVLRVINEPTAAALAYGLERKGNETVLVFDLGGGTFDVTILELGEGVFEVRSTAGDTHLGGADFDQRIVNWLAEEFRKEHNFDLRKDPQALQRLIEAAERAKIELSNASETTISLPFITFDPETRTPLHLERTLSRAKFEELTADLLRRVRQPVEQALADAKLSASDIDEVILVGGSTRIPAVKRIVKEITGKEPNESVNPDEAVALGAAVQAGIIQGDANLGDIVLVDVTPLTLGVEVKGGMVAPMIPRNTTIPAKKTEIYTTAENNQPGVEIVVLQGERPMAADNKSLGRFKLEGIPPMPAGRPQIEVTFDIDANGILHVTAKEKTSGKEASIRIENTTTLDKSDVERMVKEAEQNAEADRKRRERVEKRNNLDSLRVQALGQLEENQSAPQDAKDRLKAAADEAEEAVRSDDDSRIERAQKQLEEAMRSFMTAAQSGSQNQAGQGAQTQTGRQEDDVIDADFKPAE</sequence>
<organism>
    <name type="scientific">Deinococcus geothermalis (strain DSM 11300 / CIP 105573 / AG-3a)</name>
    <dbReference type="NCBI Taxonomy" id="319795"/>
    <lineage>
        <taxon>Bacteria</taxon>
        <taxon>Thermotogati</taxon>
        <taxon>Deinococcota</taxon>
        <taxon>Deinococci</taxon>
        <taxon>Deinococcales</taxon>
        <taxon>Deinococcaceae</taxon>
        <taxon>Deinococcus</taxon>
    </lineage>
</organism>
<dbReference type="EMBL" id="CP000359">
    <property type="protein sequence ID" value="ABF46370.1"/>
    <property type="molecule type" value="Genomic_DNA"/>
</dbReference>
<dbReference type="RefSeq" id="WP_011531196.1">
    <property type="nucleotide sequence ID" value="NC_008025.1"/>
</dbReference>
<dbReference type="SMR" id="Q1IWL4"/>
<dbReference type="STRING" id="319795.Dgeo_2076"/>
<dbReference type="KEGG" id="dge:Dgeo_2076"/>
<dbReference type="eggNOG" id="COG0443">
    <property type="taxonomic scope" value="Bacteria"/>
</dbReference>
<dbReference type="HOGENOM" id="CLU_005965_2_1_0"/>
<dbReference type="Proteomes" id="UP000002431">
    <property type="component" value="Chromosome"/>
</dbReference>
<dbReference type="GO" id="GO:0005524">
    <property type="term" value="F:ATP binding"/>
    <property type="evidence" value="ECO:0007669"/>
    <property type="project" value="UniProtKB-UniRule"/>
</dbReference>
<dbReference type="GO" id="GO:0140662">
    <property type="term" value="F:ATP-dependent protein folding chaperone"/>
    <property type="evidence" value="ECO:0007669"/>
    <property type="project" value="InterPro"/>
</dbReference>
<dbReference type="GO" id="GO:0051082">
    <property type="term" value="F:unfolded protein binding"/>
    <property type="evidence" value="ECO:0007669"/>
    <property type="project" value="InterPro"/>
</dbReference>
<dbReference type="CDD" id="cd10234">
    <property type="entry name" value="ASKHA_NBD_HSP70_DnaK-like"/>
    <property type="match status" value="1"/>
</dbReference>
<dbReference type="FunFam" id="2.60.34.10:FF:000014">
    <property type="entry name" value="Chaperone protein DnaK HSP70"/>
    <property type="match status" value="1"/>
</dbReference>
<dbReference type="FunFam" id="3.30.420.40:FF:000004">
    <property type="entry name" value="Molecular chaperone DnaK"/>
    <property type="match status" value="1"/>
</dbReference>
<dbReference type="FunFam" id="3.90.640.10:FF:000003">
    <property type="entry name" value="Molecular chaperone DnaK"/>
    <property type="match status" value="1"/>
</dbReference>
<dbReference type="Gene3D" id="1.20.1270.10">
    <property type="match status" value="1"/>
</dbReference>
<dbReference type="Gene3D" id="3.30.420.40">
    <property type="match status" value="2"/>
</dbReference>
<dbReference type="Gene3D" id="3.90.640.10">
    <property type="entry name" value="Actin, Chain A, domain 4"/>
    <property type="match status" value="1"/>
</dbReference>
<dbReference type="Gene3D" id="2.60.34.10">
    <property type="entry name" value="Substrate Binding Domain Of DNAk, Chain A, domain 1"/>
    <property type="match status" value="1"/>
</dbReference>
<dbReference type="HAMAP" id="MF_00332">
    <property type="entry name" value="DnaK"/>
    <property type="match status" value="1"/>
</dbReference>
<dbReference type="InterPro" id="IPR043129">
    <property type="entry name" value="ATPase_NBD"/>
</dbReference>
<dbReference type="InterPro" id="IPR012725">
    <property type="entry name" value="Chaperone_DnaK"/>
</dbReference>
<dbReference type="InterPro" id="IPR018181">
    <property type="entry name" value="Heat_shock_70_CS"/>
</dbReference>
<dbReference type="InterPro" id="IPR029048">
    <property type="entry name" value="HSP70_C_sf"/>
</dbReference>
<dbReference type="InterPro" id="IPR029047">
    <property type="entry name" value="HSP70_peptide-bd_sf"/>
</dbReference>
<dbReference type="InterPro" id="IPR013126">
    <property type="entry name" value="Hsp_70_fam"/>
</dbReference>
<dbReference type="NCBIfam" id="NF001413">
    <property type="entry name" value="PRK00290.1"/>
    <property type="match status" value="1"/>
</dbReference>
<dbReference type="NCBIfam" id="TIGR02350">
    <property type="entry name" value="prok_dnaK"/>
    <property type="match status" value="1"/>
</dbReference>
<dbReference type="PANTHER" id="PTHR19375">
    <property type="entry name" value="HEAT SHOCK PROTEIN 70KDA"/>
    <property type="match status" value="1"/>
</dbReference>
<dbReference type="Pfam" id="PF00012">
    <property type="entry name" value="HSP70"/>
    <property type="match status" value="1"/>
</dbReference>
<dbReference type="PRINTS" id="PR00301">
    <property type="entry name" value="HEATSHOCK70"/>
</dbReference>
<dbReference type="SUPFAM" id="SSF53067">
    <property type="entry name" value="Actin-like ATPase domain"/>
    <property type="match status" value="2"/>
</dbReference>
<dbReference type="SUPFAM" id="SSF100934">
    <property type="entry name" value="Heat shock protein 70kD (HSP70), C-terminal subdomain"/>
    <property type="match status" value="1"/>
</dbReference>
<dbReference type="SUPFAM" id="SSF100920">
    <property type="entry name" value="Heat shock protein 70kD (HSP70), peptide-binding domain"/>
    <property type="match status" value="1"/>
</dbReference>
<dbReference type="PROSITE" id="PS00297">
    <property type="entry name" value="HSP70_1"/>
    <property type="match status" value="1"/>
</dbReference>
<dbReference type="PROSITE" id="PS00329">
    <property type="entry name" value="HSP70_2"/>
    <property type="match status" value="1"/>
</dbReference>
<dbReference type="PROSITE" id="PS01036">
    <property type="entry name" value="HSP70_3"/>
    <property type="match status" value="1"/>
</dbReference>
<feature type="chain" id="PRO_1000059549" description="Chaperone protein DnaK">
    <location>
        <begin position="1"/>
        <end position="629"/>
    </location>
</feature>
<feature type="region of interest" description="Disordered" evidence="2">
    <location>
        <begin position="514"/>
        <end position="533"/>
    </location>
</feature>
<feature type="region of interest" description="Disordered" evidence="2">
    <location>
        <begin position="543"/>
        <end position="629"/>
    </location>
</feature>
<feature type="compositionally biased region" description="Basic and acidic residues" evidence="2">
    <location>
        <begin position="555"/>
        <end position="590"/>
    </location>
</feature>
<feature type="compositionally biased region" description="Low complexity" evidence="2">
    <location>
        <begin position="595"/>
        <end position="614"/>
    </location>
</feature>
<feature type="compositionally biased region" description="Basic and acidic residues" evidence="2">
    <location>
        <begin position="615"/>
        <end position="629"/>
    </location>
</feature>
<feature type="modified residue" description="Phosphothreonine; by autocatalysis" evidence="1">
    <location>
        <position position="195"/>
    </location>
</feature>
<protein>
    <recommendedName>
        <fullName evidence="1">Chaperone protein DnaK</fullName>
    </recommendedName>
    <alternativeName>
        <fullName evidence="1">HSP70</fullName>
    </alternativeName>
    <alternativeName>
        <fullName evidence="1">Heat shock 70 kDa protein</fullName>
    </alternativeName>
    <alternativeName>
        <fullName evidence="1">Heat shock protein 70</fullName>
    </alternativeName>
</protein>
<keyword id="KW-0067">ATP-binding</keyword>
<keyword id="KW-0143">Chaperone</keyword>
<keyword id="KW-0547">Nucleotide-binding</keyword>
<keyword id="KW-0597">Phosphoprotein</keyword>
<keyword id="KW-0346">Stress response</keyword>
<proteinExistence type="inferred from homology"/>
<reference key="1">
    <citation type="submission" date="2006-04" db="EMBL/GenBank/DDBJ databases">
        <title>Complete sequence of chromosome of Deinococcus geothermalis DSM 11300.</title>
        <authorList>
            <person name="Copeland A."/>
            <person name="Lucas S."/>
            <person name="Lapidus A."/>
            <person name="Barry K."/>
            <person name="Detter J.C."/>
            <person name="Glavina del Rio T."/>
            <person name="Hammon N."/>
            <person name="Israni S."/>
            <person name="Dalin E."/>
            <person name="Tice H."/>
            <person name="Pitluck S."/>
            <person name="Brettin T."/>
            <person name="Bruce D."/>
            <person name="Han C."/>
            <person name="Tapia R."/>
            <person name="Saunders E."/>
            <person name="Gilna P."/>
            <person name="Schmutz J."/>
            <person name="Larimer F."/>
            <person name="Land M."/>
            <person name="Hauser L."/>
            <person name="Kyrpides N."/>
            <person name="Kim E."/>
            <person name="Daly M.J."/>
            <person name="Fredrickson J.K."/>
            <person name="Makarova K.S."/>
            <person name="Gaidamakova E.K."/>
            <person name="Zhai M."/>
            <person name="Richardson P."/>
        </authorList>
    </citation>
    <scope>NUCLEOTIDE SEQUENCE [LARGE SCALE GENOMIC DNA]</scope>
    <source>
        <strain>DSM 11300 / CIP 105573 / AG-3a</strain>
    </source>
</reference>
<gene>
    <name evidence="1" type="primary">dnaK</name>
    <name type="ordered locus">Dgeo_2076</name>
</gene>
<evidence type="ECO:0000255" key="1">
    <source>
        <dbReference type="HAMAP-Rule" id="MF_00332"/>
    </source>
</evidence>
<evidence type="ECO:0000256" key="2">
    <source>
        <dbReference type="SAM" id="MobiDB-lite"/>
    </source>
</evidence>
<accession>Q1IWL4</accession>
<name>DNAK_DEIGD</name>
<comment type="function">
    <text evidence="1">Acts as a chaperone.</text>
</comment>
<comment type="induction">
    <text evidence="1">By stress conditions e.g. heat shock.</text>
</comment>
<comment type="similarity">
    <text evidence="1">Belongs to the heat shock protein 70 family.</text>
</comment>